<name>22P1_RAT</name>
<dbReference type="EMBL" id="M58167">
    <property type="protein sequence ID" value="AAA63498.1"/>
    <property type="molecule type" value="mRNA"/>
</dbReference>
<dbReference type="EMBL" id="M27901">
    <property type="protein sequence ID" value="AAA42345.1"/>
    <property type="molecule type" value="mRNA"/>
</dbReference>
<dbReference type="EMBL" id="Z13993">
    <property type="protein sequence ID" value="CAA78384.1"/>
    <property type="molecule type" value="Genomic_DNA"/>
</dbReference>
<dbReference type="EMBL" id="S48988">
    <property type="protein sequence ID" value="AAA12401.1"/>
    <property type="molecule type" value="mRNA"/>
</dbReference>
<dbReference type="EMBL" id="S57980">
    <property type="protein sequence ID" value="AAB26027.1"/>
    <property type="molecule type" value="Genomic_DNA"/>
</dbReference>
<dbReference type="EMBL" id="L12454">
    <property type="protein sequence ID" value="AAA40732.1"/>
    <property type="molecule type" value="Genomic_DNA"/>
</dbReference>
<dbReference type="PIR" id="A49304">
    <property type="entry name" value="A49304"/>
</dbReference>
<dbReference type="RefSeq" id="NP_036850.1">
    <property type="nucleotide sequence ID" value="NM_012718.2"/>
</dbReference>
<dbReference type="STRING" id="10116.ENSRNOP00000040184"/>
<dbReference type="GlyCosmos" id="P22282">
    <property type="glycosylation" value="1 site, No reported glycans"/>
</dbReference>
<dbReference type="GlyGen" id="P22282">
    <property type="glycosylation" value="1 site"/>
</dbReference>
<dbReference type="iPTMnet" id="P22282"/>
<dbReference type="PhosphoSitePlus" id="P22282"/>
<dbReference type="PaxDb" id="10116-ENSRNOP00000040184"/>
<dbReference type="GeneID" id="25030"/>
<dbReference type="KEGG" id="rno:25030"/>
<dbReference type="UCSC" id="RGD:2115">
    <property type="organism name" value="rat"/>
</dbReference>
<dbReference type="AGR" id="RGD:2115"/>
<dbReference type="CTD" id="25030"/>
<dbReference type="RGD" id="2115">
    <property type="gene designation" value="Andpro"/>
</dbReference>
<dbReference type="InParanoid" id="P22282"/>
<dbReference type="OrthoDB" id="9639758at2759"/>
<dbReference type="PhylomeDB" id="P22282"/>
<dbReference type="TreeFam" id="TF340321"/>
<dbReference type="PRO" id="PR:P22282"/>
<dbReference type="Proteomes" id="UP000002494">
    <property type="component" value="Unplaced"/>
</dbReference>
<dbReference type="GO" id="GO:0005737">
    <property type="term" value="C:cytoplasm"/>
    <property type="evidence" value="ECO:0000318"/>
    <property type="project" value="GO_Central"/>
</dbReference>
<dbReference type="GO" id="GO:0005576">
    <property type="term" value="C:extracellular region"/>
    <property type="evidence" value="ECO:0000314"/>
    <property type="project" value="RGD"/>
</dbReference>
<dbReference type="GO" id="GO:0005615">
    <property type="term" value="C:extracellular space"/>
    <property type="evidence" value="ECO:0000266"/>
    <property type="project" value="RGD"/>
</dbReference>
<dbReference type="GO" id="GO:0031982">
    <property type="term" value="C:vesicle"/>
    <property type="evidence" value="ECO:0000318"/>
    <property type="project" value="GO_Central"/>
</dbReference>
<dbReference type="GO" id="GO:0004869">
    <property type="term" value="F:cysteine-type endopeptidase inhibitor activity"/>
    <property type="evidence" value="ECO:0000266"/>
    <property type="project" value="RGD"/>
</dbReference>
<dbReference type="GO" id="GO:0030521">
    <property type="term" value="P:androgen receptor signaling pathway"/>
    <property type="evidence" value="ECO:0000315"/>
    <property type="project" value="RGD"/>
</dbReference>
<dbReference type="GO" id="GO:0071549">
    <property type="term" value="P:cellular response to dexamethasone stimulus"/>
    <property type="evidence" value="ECO:0000270"/>
    <property type="project" value="RGD"/>
</dbReference>
<dbReference type="GO" id="GO:0071394">
    <property type="term" value="P:cellular response to testosterone stimulus"/>
    <property type="evidence" value="ECO:0000270"/>
    <property type="project" value="RGD"/>
</dbReference>
<dbReference type="GO" id="GO:0001580">
    <property type="term" value="P:detection of chemical stimulus involved in sensory perception of bitter taste"/>
    <property type="evidence" value="ECO:0000266"/>
    <property type="project" value="RGD"/>
</dbReference>
<dbReference type="GO" id="GO:0045861">
    <property type="term" value="P:negative regulation of proteolysis"/>
    <property type="evidence" value="ECO:0000266"/>
    <property type="project" value="RGD"/>
</dbReference>
<dbReference type="GO" id="GO:0033574">
    <property type="term" value="P:response to testosterone"/>
    <property type="evidence" value="ECO:0000270"/>
    <property type="project" value="RGD"/>
</dbReference>
<dbReference type="CDD" id="cd00042">
    <property type="entry name" value="CY"/>
    <property type="match status" value="1"/>
</dbReference>
<dbReference type="InterPro" id="IPR000010">
    <property type="entry name" value="Cystatin_dom"/>
</dbReference>
<dbReference type="InterPro" id="IPR046350">
    <property type="entry name" value="Cystatin_sf"/>
</dbReference>
<dbReference type="PANTHER" id="PTHR46186">
    <property type="entry name" value="CYSTATIN"/>
    <property type="match status" value="1"/>
</dbReference>
<dbReference type="PANTHER" id="PTHR46186:SF4">
    <property type="entry name" value="CYSTATIN 10"/>
    <property type="match status" value="1"/>
</dbReference>
<dbReference type="SMART" id="SM00043">
    <property type="entry name" value="CY"/>
    <property type="match status" value="1"/>
</dbReference>
<dbReference type="SUPFAM" id="SSF54403">
    <property type="entry name" value="Cystatin/monellin"/>
    <property type="match status" value="1"/>
</dbReference>
<sequence length="176" mass="21060">MCKTLHGTLLLLAIFVLFLNFSHATAKRTRRGMEIFEKNFIDKNKLKDVYDVFKYLYNTHSADTYLSNIKNESFTMNIWGFGEIEMVKTKCRKIDSDFYKCSFQREFYNLKRTPGETMYYISLPGSVRCRKLLSKLDNCPFEEQTEQLKREICYFVVYPDYIEQNIHAVRFDCYTK</sequence>
<evidence type="ECO:0000250" key="1"/>
<evidence type="ECO:0000255" key="2"/>
<evidence type="ECO:0000305" key="3"/>
<accession>P22282</accession>
<accession>Q63674</accession>
<comment type="tissue specificity">
    <text>Prostate and lacrimal gland.</text>
</comment>
<comment type="induction">
    <text>By androgens.</text>
</comment>
<comment type="similarity">
    <text evidence="3">Belongs to the cystatin family.</text>
</comment>
<feature type="signal peptide" evidence="2">
    <location>
        <begin position="1"/>
        <end position="26"/>
    </location>
</feature>
<feature type="propeptide" id="PRO_0000006671" evidence="2">
    <location>
        <begin position="27"/>
        <end position="31"/>
    </location>
</feature>
<feature type="chain" id="PRO_0000006672" description="Cystatin-related protein 1">
    <location>
        <begin position="32"/>
        <end position="176"/>
    </location>
</feature>
<feature type="glycosylation site" description="N-linked (GlcNAc...) asparagine">
    <location>
        <position position="71"/>
    </location>
</feature>
<feature type="disulfide bond" evidence="1">
    <location>
        <begin position="129"/>
        <end position="139"/>
    </location>
</feature>
<feature type="disulfide bond" evidence="1">
    <location>
        <begin position="153"/>
        <end position="173"/>
    </location>
</feature>
<feature type="sequence conflict" description="In Ref. 2; AA sequence." evidence="3" ref="2">
    <location>
        <begin position="1"/>
        <end position="22"/>
    </location>
</feature>
<feature type="sequence conflict" description="In Ref. 2; AAA42345." evidence="3" ref="2">
    <original>HA</original>
    <variation>MQ</variation>
    <location>
        <begin position="23"/>
        <end position="24"/>
    </location>
</feature>
<feature type="sequence conflict" description="In Ref. 2; AAA42345, 3; CAA78384 and 6; AAA40732." evidence="3" ref="2 3 6">
    <original>V</original>
    <variation>L</variation>
    <location>
        <position position="157"/>
    </location>
</feature>
<keyword id="KW-0165">Cleavage on pair of basic residues</keyword>
<keyword id="KW-0903">Direct protein sequencing</keyword>
<keyword id="KW-1015">Disulfide bond</keyword>
<keyword id="KW-0325">Glycoprotein</keyword>
<keyword id="KW-0646">Protease inhibitor</keyword>
<keyword id="KW-1185">Reference proteome</keyword>
<keyword id="KW-0732">Signal</keyword>
<keyword id="KW-0789">Thiol protease inhibitor</keyword>
<proteinExistence type="evidence at protein level"/>
<protein>
    <recommendedName>
        <fullName>Cystatin-related protein 1</fullName>
        <shortName>CRP-1</shortName>
    </recommendedName>
    <alternativeName>
        <fullName>Androgen-regulated 20 kDa protein</fullName>
    </alternativeName>
    <alternativeName>
        <fullName>Prostatic 22 kDa glycoprotein P22K16/P22K20</fullName>
    </alternativeName>
</protein>
<gene>
    <name type="primary">Andpro</name>
    <name type="synonym">Crp1</name>
</gene>
<organism>
    <name type="scientific">Rattus norvegicus</name>
    <name type="common">Rat</name>
    <dbReference type="NCBI Taxonomy" id="10116"/>
    <lineage>
        <taxon>Eukaryota</taxon>
        <taxon>Metazoa</taxon>
        <taxon>Chordata</taxon>
        <taxon>Craniata</taxon>
        <taxon>Vertebrata</taxon>
        <taxon>Euteleostomi</taxon>
        <taxon>Mammalia</taxon>
        <taxon>Eutheria</taxon>
        <taxon>Euarchontoglires</taxon>
        <taxon>Glires</taxon>
        <taxon>Rodentia</taxon>
        <taxon>Myomorpha</taxon>
        <taxon>Muroidea</taxon>
        <taxon>Muridae</taxon>
        <taxon>Murinae</taxon>
        <taxon>Rattus</taxon>
    </lineage>
</organism>
<reference key="1">
    <citation type="journal article" date="1990" name="Mol. Endocrinol.">
        <title>Tissue-specific expression and androgen regulation of different genes encoding rat prostatic 22-kilodalton glycoproteins homologous to human and rat cystatin.</title>
        <authorList>
            <person name="Winderickx J."/>
            <person name="Hemschoote K."/>
            <person name="de Clercq N."/>
            <person name="van Dijck P."/>
            <person name="Peeters B."/>
            <person name="Rombauts W."/>
            <person name="Verhoeven G."/>
            <person name="Heyns W."/>
        </authorList>
    </citation>
    <scope>NUCLEOTIDE SEQUENCE [MRNA]</scope>
    <source>
        <strain>Wistar</strain>
        <tissue>Prostate</tissue>
    </source>
</reference>
<reference key="2">
    <citation type="journal article" date="1989" name="Biochemistry">
        <title>Primary structure and androgen regulation of a 20-kilodalton protein specific to rat ventral prostate.</title>
        <authorList>
            <person name="Ho K.-C."/>
            <person name="Snoek R."/>
            <person name="Quarmby V."/>
            <person name="Viskochil D.H."/>
            <person name="Rennie P.S."/>
            <person name="Wilson E.M."/>
            <person name="French F.S."/>
            <person name="Bruchovsky N."/>
        </authorList>
    </citation>
    <scope>NUCLEOTIDE SEQUENCE [MRNA]</scope>
    <scope>PROTEIN SEQUENCE OF 32-81</scope>
</reference>
<reference key="3">
    <citation type="journal article" date="1992" name="Endocrinology">
        <title>An effect of androgens on the length of the poly(A)-tail and alternative splicing cause size heterogeneity of the messenger ribonucleic acids encoding cystatin-related protein.</title>
        <authorList>
            <person name="Vercaeren I."/>
            <person name="Winderickx J."/>
            <person name="Devos A."/>
            <person name="Peeters B."/>
            <person name="Heyns W."/>
        </authorList>
    </citation>
    <scope>NUCLEOTIDE SEQUENCE [GENOMIC DNA]</scope>
    <source>
        <strain>Wistar</strain>
    </source>
</reference>
<reference key="4">
    <citation type="journal article" date="1993" name="Endocrinology">
        <authorList>
            <person name="Vercaeren I."/>
            <person name="Winderickx J."/>
            <person name="Devos A."/>
            <person name="Peeters B."/>
            <person name="Heyns W."/>
        </authorList>
    </citation>
    <scope>ERRATUM OF PUBMED:7679983</scope>
</reference>
<reference key="5">
    <citation type="journal article" date="1993" name="Gene">
        <title>Structure of rat genes encoding androgen-regulated cystatin-related proteins (CRPs): a new member of the cystatin superfamily.</title>
        <authorList>
            <person name="Devos A."/>
            <person name="de Clercq N."/>
            <person name="Vercaeren I."/>
            <person name="Heyns W."/>
            <person name="Rombauts W."/>
            <person name="Peeters B."/>
        </authorList>
    </citation>
    <scope>NUCLEOTIDE SEQUENCE [GENOMIC DNA]</scope>
</reference>
<reference key="6">
    <citation type="journal article" date="1993" name="J. Biol. Chem.">
        <title>A complex response element in intron 1 of the androgen-regulated 20-kDa protein gene displays cell type-dependent androgen receptor specificity.</title>
        <authorList>
            <person name="Ho K.-C."/>
            <person name="Marschke K.B."/>
            <person name="Tan J.A."/>
            <person name="Power S.G.A."/>
            <person name="Wilson E.M."/>
            <person name="French F.S."/>
        </authorList>
    </citation>
    <scope>NUCLEOTIDE SEQUENCE [GENOMIC DNA]</scope>
</reference>